<evidence type="ECO:0000256" key="1">
    <source>
        <dbReference type="SAM" id="MobiDB-lite"/>
    </source>
</evidence>
<evidence type="ECO:0000269" key="2">
    <source>
    </source>
</evidence>
<name>TAM11_SCHPO</name>
<gene>
    <name type="primary">tam11</name>
    <name type="ORF">SPBC17D1.17</name>
</gene>
<sequence>MEREGKEDVRKADHKIVYGIERVRHGINNFFDDVGKAVKSESDTADSKRSAEAKADEAPAKM</sequence>
<keyword id="KW-1185">Reference proteome</keyword>
<organism>
    <name type="scientific">Schizosaccharomyces pombe (strain 972 / ATCC 24843)</name>
    <name type="common">Fission yeast</name>
    <dbReference type="NCBI Taxonomy" id="284812"/>
    <lineage>
        <taxon>Eukaryota</taxon>
        <taxon>Fungi</taxon>
        <taxon>Dikarya</taxon>
        <taxon>Ascomycota</taxon>
        <taxon>Taphrinomycotina</taxon>
        <taxon>Schizosaccharomycetes</taxon>
        <taxon>Schizosaccharomycetales</taxon>
        <taxon>Schizosaccharomycetaceae</taxon>
        <taxon>Schizosaccharomyces</taxon>
    </lineage>
</organism>
<feature type="chain" id="PRO_0000416520" description="Uncharacterized protein tam11">
    <location>
        <begin position="1"/>
        <end position="62"/>
    </location>
</feature>
<feature type="region of interest" description="Disordered" evidence="1">
    <location>
        <begin position="38"/>
        <end position="62"/>
    </location>
</feature>
<accession>G2TRQ6</accession>
<reference key="1">
    <citation type="journal article" date="2002" name="Nature">
        <title>The genome sequence of Schizosaccharomyces pombe.</title>
        <authorList>
            <person name="Wood V."/>
            <person name="Gwilliam R."/>
            <person name="Rajandream M.A."/>
            <person name="Lyne M.H."/>
            <person name="Lyne R."/>
            <person name="Stewart A."/>
            <person name="Sgouros J.G."/>
            <person name="Peat N."/>
            <person name="Hayles J."/>
            <person name="Baker S.G."/>
            <person name="Basham D."/>
            <person name="Bowman S."/>
            <person name="Brooks K."/>
            <person name="Brown D."/>
            <person name="Brown S."/>
            <person name="Chillingworth T."/>
            <person name="Churcher C.M."/>
            <person name="Collins M."/>
            <person name="Connor R."/>
            <person name="Cronin A."/>
            <person name="Davis P."/>
            <person name="Feltwell T."/>
            <person name="Fraser A."/>
            <person name="Gentles S."/>
            <person name="Goble A."/>
            <person name="Hamlin N."/>
            <person name="Harris D.E."/>
            <person name="Hidalgo J."/>
            <person name="Hodgson G."/>
            <person name="Holroyd S."/>
            <person name="Hornsby T."/>
            <person name="Howarth S."/>
            <person name="Huckle E.J."/>
            <person name="Hunt S."/>
            <person name="Jagels K."/>
            <person name="James K.D."/>
            <person name="Jones L."/>
            <person name="Jones M."/>
            <person name="Leather S."/>
            <person name="McDonald S."/>
            <person name="McLean J."/>
            <person name="Mooney P."/>
            <person name="Moule S."/>
            <person name="Mungall K.L."/>
            <person name="Murphy L.D."/>
            <person name="Niblett D."/>
            <person name="Odell C."/>
            <person name="Oliver K."/>
            <person name="O'Neil S."/>
            <person name="Pearson D."/>
            <person name="Quail M.A."/>
            <person name="Rabbinowitsch E."/>
            <person name="Rutherford K.M."/>
            <person name="Rutter S."/>
            <person name="Saunders D."/>
            <person name="Seeger K."/>
            <person name="Sharp S."/>
            <person name="Skelton J."/>
            <person name="Simmonds M.N."/>
            <person name="Squares R."/>
            <person name="Squares S."/>
            <person name="Stevens K."/>
            <person name="Taylor K."/>
            <person name="Taylor R.G."/>
            <person name="Tivey A."/>
            <person name="Walsh S.V."/>
            <person name="Warren T."/>
            <person name="Whitehead S."/>
            <person name="Woodward J.R."/>
            <person name="Volckaert G."/>
            <person name="Aert R."/>
            <person name="Robben J."/>
            <person name="Grymonprez B."/>
            <person name="Weltjens I."/>
            <person name="Vanstreels E."/>
            <person name="Rieger M."/>
            <person name="Schaefer M."/>
            <person name="Mueller-Auer S."/>
            <person name="Gabel C."/>
            <person name="Fuchs M."/>
            <person name="Duesterhoeft A."/>
            <person name="Fritzc C."/>
            <person name="Holzer E."/>
            <person name="Moestl D."/>
            <person name="Hilbert H."/>
            <person name="Borzym K."/>
            <person name="Langer I."/>
            <person name="Beck A."/>
            <person name="Lehrach H."/>
            <person name="Reinhardt R."/>
            <person name="Pohl T.M."/>
            <person name="Eger P."/>
            <person name="Zimmermann W."/>
            <person name="Wedler H."/>
            <person name="Wambutt R."/>
            <person name="Purnelle B."/>
            <person name="Goffeau A."/>
            <person name="Cadieu E."/>
            <person name="Dreano S."/>
            <person name="Gloux S."/>
            <person name="Lelaure V."/>
            <person name="Mottier S."/>
            <person name="Galibert F."/>
            <person name="Aves S.J."/>
            <person name="Xiang Z."/>
            <person name="Hunt C."/>
            <person name="Moore K."/>
            <person name="Hurst S.M."/>
            <person name="Lucas M."/>
            <person name="Rochet M."/>
            <person name="Gaillardin C."/>
            <person name="Tallada V.A."/>
            <person name="Garzon A."/>
            <person name="Thode G."/>
            <person name="Daga R.R."/>
            <person name="Cruzado L."/>
            <person name="Jimenez J."/>
            <person name="Sanchez M."/>
            <person name="del Rey F."/>
            <person name="Benito J."/>
            <person name="Dominguez A."/>
            <person name="Revuelta J.L."/>
            <person name="Moreno S."/>
            <person name="Armstrong J."/>
            <person name="Forsburg S.L."/>
            <person name="Cerutti L."/>
            <person name="Lowe T."/>
            <person name="McCombie W.R."/>
            <person name="Paulsen I."/>
            <person name="Potashkin J."/>
            <person name="Shpakovski G.V."/>
            <person name="Ussery D."/>
            <person name="Barrell B.G."/>
            <person name="Nurse P."/>
        </authorList>
    </citation>
    <scope>NUCLEOTIDE SEQUENCE [LARGE SCALE GENOMIC DNA]</scope>
    <source>
        <strain>972 / ATCC 24843</strain>
    </source>
</reference>
<reference key="2">
    <citation type="journal article" date="2011" name="Science">
        <title>Comparative functional genomics of the fission yeasts.</title>
        <authorList>
            <person name="Rhind N."/>
            <person name="Chen Z."/>
            <person name="Yassour M."/>
            <person name="Thompson D.A."/>
            <person name="Haas B.J."/>
            <person name="Habib N."/>
            <person name="Wapinski I."/>
            <person name="Roy S."/>
            <person name="Lin M.F."/>
            <person name="Heiman D.I."/>
            <person name="Young S.K."/>
            <person name="Furuya K."/>
            <person name="Guo Y."/>
            <person name="Pidoux A."/>
            <person name="Chen H.M."/>
            <person name="Robbertse B."/>
            <person name="Goldberg J.M."/>
            <person name="Aoki K."/>
            <person name="Bayne E.H."/>
            <person name="Berlin A.M."/>
            <person name="Desjardins C.A."/>
            <person name="Dobbs E."/>
            <person name="Dukaj L."/>
            <person name="Fan L."/>
            <person name="FitzGerald M.G."/>
            <person name="French C."/>
            <person name="Gujja S."/>
            <person name="Hansen K."/>
            <person name="Keifenheim D."/>
            <person name="Levin J.Z."/>
            <person name="Mosher R.A."/>
            <person name="Mueller C.A."/>
            <person name="Pfiffner J."/>
            <person name="Priest M."/>
            <person name="Russ C."/>
            <person name="Smialowska A."/>
            <person name="Swoboda P."/>
            <person name="Sykes S.M."/>
            <person name="Vaughn M."/>
            <person name="Vengrova S."/>
            <person name="Yoder R."/>
            <person name="Zeng Q."/>
            <person name="Allshire R."/>
            <person name="Baulcombe D."/>
            <person name="Birren B.W."/>
            <person name="Brown W."/>
            <person name="Ekwall K."/>
            <person name="Kellis M."/>
            <person name="Leatherwood J."/>
            <person name="Levin H."/>
            <person name="Margalit H."/>
            <person name="Martienssen R."/>
            <person name="Nieduszynski C.A."/>
            <person name="Spatafora J.W."/>
            <person name="Friedman N."/>
            <person name="Dalgaard J.Z."/>
            <person name="Baumann P."/>
            <person name="Niki H."/>
            <person name="Regev A."/>
            <person name="Nusbaum C."/>
        </authorList>
    </citation>
    <scope>IDENTIFICATION</scope>
</reference>
<reference key="3">
    <citation type="journal article" date="2011" name="Genetics">
        <title>Augmented annotation of the Schizosaccharomyces pombe genome reveals additional genes required for growth and viability.</title>
        <authorList>
            <person name="Bitton D.A."/>
            <person name="Wood V."/>
            <person name="Scutt P.J."/>
            <person name="Grallert A."/>
            <person name="Yates T."/>
            <person name="Smith D.L."/>
            <person name="Hagan I.M."/>
            <person name="Miller C.J."/>
        </authorList>
    </citation>
    <scope>IDENTIFICATION BY MASS SPECTROMETRY</scope>
    <scope>INDUCTION</scope>
    <scope>DISRUPTION PHENOTYPE</scope>
</reference>
<proteinExistence type="evidence at protein level"/>
<dbReference type="EMBL" id="CU329671">
    <property type="protein sequence ID" value="CCD31379.1"/>
    <property type="molecule type" value="Genomic_DNA"/>
</dbReference>
<dbReference type="RefSeq" id="XP_004001727.1">
    <property type="nucleotide sequence ID" value="XM_004001678.1"/>
</dbReference>
<dbReference type="SMR" id="G2TRQ6"/>
<dbReference type="iPTMnet" id="G2TRQ6"/>
<dbReference type="PaxDb" id="4896-SPBC17D1.17.1"/>
<dbReference type="EnsemblFungi" id="SPBC17D1.17.1">
    <property type="protein sequence ID" value="SPBC17D1.17.1:pep"/>
    <property type="gene ID" value="SPBC17D1.17"/>
</dbReference>
<dbReference type="PomBase" id="SPBC17D1.17">
    <property type="gene designation" value="tam11"/>
</dbReference>
<dbReference type="VEuPathDB" id="FungiDB:SPBC17D1.17"/>
<dbReference type="HOGENOM" id="CLU_2905454_0_0_1"/>
<dbReference type="InParanoid" id="G2TRQ6"/>
<dbReference type="OMA" id="RHGINNF"/>
<dbReference type="PRO" id="PR:G2TRQ6"/>
<dbReference type="Proteomes" id="UP000002485">
    <property type="component" value="Chromosome II"/>
</dbReference>
<protein>
    <recommendedName>
        <fullName>Uncharacterized protein tam11</fullName>
    </recommendedName>
    <alternativeName>
        <fullName>Transcripts altered in meiosis protein 11</fullName>
    </alternativeName>
</protein>
<comment type="induction">
    <text evidence="2">Differentially expressed during meiosis.</text>
</comment>
<comment type="disruption phenotype">
    <text evidence="2">Elongated cellular morphology at division.</text>
</comment>